<accession>Q1LSQ2</accession>
<feature type="chain" id="PRO_1000009987" description="DNA mismatch repair protein MutL">
    <location>
        <begin position="1"/>
        <end position="602"/>
    </location>
</feature>
<comment type="function">
    <text evidence="1">This protein is involved in the repair of mismatches in DNA. It is required for dam-dependent methyl-directed DNA mismatch repair. May act as a 'molecular matchmaker', a protein that promotes the formation of a stable complex between two or more DNA-binding proteins in an ATP-dependent manner without itself being part of a final effector complex.</text>
</comment>
<comment type="similarity">
    <text evidence="1">Belongs to the DNA mismatch repair MutL/HexB family.</text>
</comment>
<organism>
    <name type="scientific">Baumannia cicadellinicola subsp. Homalodisca coagulata</name>
    <dbReference type="NCBI Taxonomy" id="374463"/>
    <lineage>
        <taxon>Bacteria</taxon>
        <taxon>Pseudomonadati</taxon>
        <taxon>Pseudomonadota</taxon>
        <taxon>Gammaproteobacteria</taxon>
        <taxon>Candidatus Palibaumannia</taxon>
    </lineage>
</organism>
<proteinExistence type="inferred from homology"/>
<evidence type="ECO:0000255" key="1">
    <source>
        <dbReference type="HAMAP-Rule" id="MF_00149"/>
    </source>
</evidence>
<name>MUTL_BAUCH</name>
<protein>
    <recommendedName>
        <fullName evidence="1">DNA mismatch repair protein MutL</fullName>
    </recommendedName>
</protein>
<gene>
    <name evidence="1" type="primary">mutL</name>
    <name type="ordered locus">BCI_0584</name>
</gene>
<reference key="1">
    <citation type="journal article" date="2006" name="PLoS Biol.">
        <title>Metabolic complementarity and genomics of the dual bacterial symbiosis of sharpshooters.</title>
        <authorList>
            <person name="Wu D."/>
            <person name="Daugherty S.C."/>
            <person name="Van Aken S.E."/>
            <person name="Pai G.H."/>
            <person name="Watkins K.L."/>
            <person name="Khouri H."/>
            <person name="Tallon L.J."/>
            <person name="Zaborsky J.M."/>
            <person name="Dunbar H.E."/>
            <person name="Tran P.L."/>
            <person name="Moran N.A."/>
            <person name="Eisen J.A."/>
        </authorList>
    </citation>
    <scope>NUCLEOTIDE SEQUENCE [LARGE SCALE GENOMIC DNA]</scope>
</reference>
<sequence length="602" mass="68415">MQIHRLSPQLINQIAAGEVVERPASVVKELIENSLDAGATRIDIEVELGGAKVIRIRDNGYGISKKDIVLAVARHTTSKISSIEDLECIKSMGFRGEALASISSVAHLNLTSRTAKQNEAWQVYTERYTEKVMLLPIAHPVGTTVEVLDLFYNTPARRKFMRAEQTEFKHIEEVIRRMALARFDVTFILQHNNKIVQHYRAVKEPSQYWRRLSRLCGNTFVNNALKISWQNIDFSIQGWVEDPSCIKLPEMQYSYVNQRIIRNKLINHAIRHAYQDQLKGPHQPSFVIFIVINPQQLDINVHPAKKEIKFYEARKVHHFIYQALMTVLQQRVKLSSDTCYSTTQKPIGKIIPSHALNQLNEGKNNILVSYSAAAKNADELLSNQIIQDPDEAKMQDIPAKCQATKNSCSTSLSNDFYSFGKMLTFCSPCYALLESAQGLSLLSLQFAERYITERQLTPENNSDTILAQPLLIPLRIILSNGEASALHQHRLLLQRMGILLQPNENETILNAVPLPLLRKKNLSNLILDLLRYLNNETSVTYHKIASWLACSLNSQITTWNYSRAIPLIAEVERLCPHWIKNPPNALIVKLDLKMAIKALNNS</sequence>
<keyword id="KW-0227">DNA damage</keyword>
<keyword id="KW-0234">DNA repair</keyword>
<keyword id="KW-1185">Reference proteome</keyword>
<dbReference type="EMBL" id="CP000238">
    <property type="protein sequence ID" value="ABF13838.1"/>
    <property type="molecule type" value="Genomic_DNA"/>
</dbReference>
<dbReference type="RefSeq" id="WP_011520745.1">
    <property type="nucleotide sequence ID" value="NC_007984.1"/>
</dbReference>
<dbReference type="SMR" id="Q1LSQ2"/>
<dbReference type="STRING" id="374463.BCI_0584"/>
<dbReference type="KEGG" id="bci:BCI_0584"/>
<dbReference type="HOGENOM" id="CLU_004131_5_1_6"/>
<dbReference type="OrthoDB" id="9763467at2"/>
<dbReference type="Proteomes" id="UP000002427">
    <property type="component" value="Chromosome"/>
</dbReference>
<dbReference type="GO" id="GO:0032300">
    <property type="term" value="C:mismatch repair complex"/>
    <property type="evidence" value="ECO:0007669"/>
    <property type="project" value="InterPro"/>
</dbReference>
<dbReference type="GO" id="GO:0005524">
    <property type="term" value="F:ATP binding"/>
    <property type="evidence" value="ECO:0007669"/>
    <property type="project" value="InterPro"/>
</dbReference>
<dbReference type="GO" id="GO:0016887">
    <property type="term" value="F:ATP hydrolysis activity"/>
    <property type="evidence" value="ECO:0007669"/>
    <property type="project" value="InterPro"/>
</dbReference>
<dbReference type="GO" id="GO:0140664">
    <property type="term" value="F:ATP-dependent DNA damage sensor activity"/>
    <property type="evidence" value="ECO:0007669"/>
    <property type="project" value="InterPro"/>
</dbReference>
<dbReference type="GO" id="GO:0030983">
    <property type="term" value="F:mismatched DNA binding"/>
    <property type="evidence" value="ECO:0007669"/>
    <property type="project" value="InterPro"/>
</dbReference>
<dbReference type="GO" id="GO:0006298">
    <property type="term" value="P:mismatch repair"/>
    <property type="evidence" value="ECO:0007669"/>
    <property type="project" value="UniProtKB-UniRule"/>
</dbReference>
<dbReference type="CDD" id="cd16926">
    <property type="entry name" value="HATPase_MutL-MLH-PMS-like"/>
    <property type="match status" value="1"/>
</dbReference>
<dbReference type="FunFam" id="3.30.565.10:FF:000003">
    <property type="entry name" value="DNA mismatch repair endonuclease MutL"/>
    <property type="match status" value="1"/>
</dbReference>
<dbReference type="Gene3D" id="3.30.230.10">
    <property type="match status" value="1"/>
</dbReference>
<dbReference type="Gene3D" id="3.30.565.10">
    <property type="entry name" value="Histidine kinase-like ATPase, C-terminal domain"/>
    <property type="match status" value="1"/>
</dbReference>
<dbReference type="Gene3D" id="3.30.1540.20">
    <property type="entry name" value="MutL, C-terminal domain, dimerisation subdomain"/>
    <property type="match status" value="1"/>
</dbReference>
<dbReference type="Gene3D" id="3.30.1370.100">
    <property type="entry name" value="MutL, C-terminal domain, regulatory subdomain"/>
    <property type="match status" value="1"/>
</dbReference>
<dbReference type="HAMAP" id="MF_00149">
    <property type="entry name" value="DNA_mis_repair"/>
    <property type="match status" value="1"/>
</dbReference>
<dbReference type="InterPro" id="IPR014762">
    <property type="entry name" value="DNA_mismatch_repair_CS"/>
</dbReference>
<dbReference type="InterPro" id="IPR020667">
    <property type="entry name" value="DNA_mismatch_repair_MutL"/>
</dbReference>
<dbReference type="InterPro" id="IPR013507">
    <property type="entry name" value="DNA_mismatch_S5_2-like"/>
</dbReference>
<dbReference type="InterPro" id="IPR036890">
    <property type="entry name" value="HATPase_C_sf"/>
</dbReference>
<dbReference type="InterPro" id="IPR002099">
    <property type="entry name" value="MutL/Mlh/PMS"/>
</dbReference>
<dbReference type="InterPro" id="IPR038973">
    <property type="entry name" value="MutL/Mlh/Pms-like"/>
</dbReference>
<dbReference type="InterPro" id="IPR014790">
    <property type="entry name" value="MutL_C"/>
</dbReference>
<dbReference type="InterPro" id="IPR042120">
    <property type="entry name" value="MutL_C_dimsub"/>
</dbReference>
<dbReference type="InterPro" id="IPR042121">
    <property type="entry name" value="MutL_C_regsub"/>
</dbReference>
<dbReference type="InterPro" id="IPR037198">
    <property type="entry name" value="MutL_C_sf"/>
</dbReference>
<dbReference type="InterPro" id="IPR020568">
    <property type="entry name" value="Ribosomal_Su5_D2-typ_SF"/>
</dbReference>
<dbReference type="InterPro" id="IPR014721">
    <property type="entry name" value="Ribsml_uS5_D2-typ_fold_subgr"/>
</dbReference>
<dbReference type="NCBIfam" id="TIGR00585">
    <property type="entry name" value="mutl"/>
    <property type="match status" value="1"/>
</dbReference>
<dbReference type="PANTHER" id="PTHR10073">
    <property type="entry name" value="DNA MISMATCH REPAIR PROTEIN MLH, PMS, MUTL"/>
    <property type="match status" value="1"/>
</dbReference>
<dbReference type="PANTHER" id="PTHR10073:SF12">
    <property type="entry name" value="DNA MISMATCH REPAIR PROTEIN MLH1"/>
    <property type="match status" value="1"/>
</dbReference>
<dbReference type="Pfam" id="PF01119">
    <property type="entry name" value="DNA_mis_repair"/>
    <property type="match status" value="1"/>
</dbReference>
<dbReference type="Pfam" id="PF13589">
    <property type="entry name" value="HATPase_c_3"/>
    <property type="match status" value="1"/>
</dbReference>
<dbReference type="Pfam" id="PF08676">
    <property type="entry name" value="MutL_C"/>
    <property type="match status" value="1"/>
</dbReference>
<dbReference type="SMART" id="SM01340">
    <property type="entry name" value="DNA_mis_repair"/>
    <property type="match status" value="1"/>
</dbReference>
<dbReference type="SMART" id="SM00853">
    <property type="entry name" value="MutL_C"/>
    <property type="match status" value="1"/>
</dbReference>
<dbReference type="SUPFAM" id="SSF55874">
    <property type="entry name" value="ATPase domain of HSP90 chaperone/DNA topoisomerase II/histidine kinase"/>
    <property type="match status" value="1"/>
</dbReference>
<dbReference type="SUPFAM" id="SSF118116">
    <property type="entry name" value="DNA mismatch repair protein MutL"/>
    <property type="match status" value="1"/>
</dbReference>
<dbReference type="SUPFAM" id="SSF54211">
    <property type="entry name" value="Ribosomal protein S5 domain 2-like"/>
    <property type="match status" value="1"/>
</dbReference>
<dbReference type="PROSITE" id="PS00058">
    <property type="entry name" value="DNA_MISMATCH_REPAIR_1"/>
    <property type="match status" value="1"/>
</dbReference>